<evidence type="ECO:0000255" key="1">
    <source>
        <dbReference type="HAMAP-Rule" id="MF_00017"/>
    </source>
</evidence>
<name>RECR_TRIV2</name>
<proteinExistence type="inferred from homology"/>
<sequence>MQRLPGVGPKTAQRLALHILKRPESEVEALAQALVEAKKQIGLCSVCFHLSSEPVCEICRNPNRENNTICVVADSRDVIALEKTREFKGKYHVLGGVISPMDGIGPEQLTITPLLRRVSQQQPKEVILAISPSVEGETTTLYVGQLLKPFTKVTRIAFGLPVGGDLEYADEITLARALEGRRELD</sequence>
<feature type="chain" id="PRO_0000322856" description="Recombination protein RecR">
    <location>
        <begin position="1"/>
        <end position="185"/>
    </location>
</feature>
<feature type="domain" description="Toprim" evidence="1">
    <location>
        <begin position="67"/>
        <end position="161"/>
    </location>
</feature>
<feature type="zinc finger region" description="C4-type" evidence="1">
    <location>
        <begin position="44"/>
        <end position="59"/>
    </location>
</feature>
<dbReference type="EMBL" id="CP000117">
    <property type="protein sequence ID" value="ABA21871.1"/>
    <property type="molecule type" value="Genomic_DNA"/>
</dbReference>
<dbReference type="SMR" id="Q3MAW5"/>
<dbReference type="STRING" id="240292.Ava_2253"/>
<dbReference type="KEGG" id="ava:Ava_2253"/>
<dbReference type="eggNOG" id="COG0353">
    <property type="taxonomic scope" value="Bacteria"/>
</dbReference>
<dbReference type="HOGENOM" id="CLU_060739_1_0_3"/>
<dbReference type="Proteomes" id="UP000002533">
    <property type="component" value="Chromosome"/>
</dbReference>
<dbReference type="GO" id="GO:0003677">
    <property type="term" value="F:DNA binding"/>
    <property type="evidence" value="ECO:0007669"/>
    <property type="project" value="UniProtKB-UniRule"/>
</dbReference>
<dbReference type="GO" id="GO:0008270">
    <property type="term" value="F:zinc ion binding"/>
    <property type="evidence" value="ECO:0007669"/>
    <property type="project" value="UniProtKB-KW"/>
</dbReference>
<dbReference type="GO" id="GO:0006310">
    <property type="term" value="P:DNA recombination"/>
    <property type="evidence" value="ECO:0007669"/>
    <property type="project" value="UniProtKB-UniRule"/>
</dbReference>
<dbReference type="GO" id="GO:0006281">
    <property type="term" value="P:DNA repair"/>
    <property type="evidence" value="ECO:0007669"/>
    <property type="project" value="UniProtKB-UniRule"/>
</dbReference>
<dbReference type="CDD" id="cd01025">
    <property type="entry name" value="TOPRIM_recR"/>
    <property type="match status" value="1"/>
</dbReference>
<dbReference type="Gene3D" id="3.30.60.80">
    <property type="match status" value="1"/>
</dbReference>
<dbReference type="Gene3D" id="3.40.1360.10">
    <property type="match status" value="1"/>
</dbReference>
<dbReference type="Gene3D" id="6.10.250.240">
    <property type="match status" value="1"/>
</dbReference>
<dbReference type="Gene3D" id="1.10.8.420">
    <property type="entry name" value="RecR Domain 1"/>
    <property type="match status" value="1"/>
</dbReference>
<dbReference type="HAMAP" id="MF_00017">
    <property type="entry name" value="RecR"/>
    <property type="match status" value="1"/>
</dbReference>
<dbReference type="InterPro" id="IPR000093">
    <property type="entry name" value="DNA_Rcmb_RecR"/>
</dbReference>
<dbReference type="InterPro" id="IPR023627">
    <property type="entry name" value="Rcmb_RecR"/>
</dbReference>
<dbReference type="InterPro" id="IPR015967">
    <property type="entry name" value="Rcmb_RecR_Znf"/>
</dbReference>
<dbReference type="InterPro" id="IPR006171">
    <property type="entry name" value="TOPRIM_dom"/>
</dbReference>
<dbReference type="InterPro" id="IPR034137">
    <property type="entry name" value="TOPRIM_RecR"/>
</dbReference>
<dbReference type="NCBIfam" id="TIGR00615">
    <property type="entry name" value="recR"/>
    <property type="match status" value="1"/>
</dbReference>
<dbReference type="PANTHER" id="PTHR30446">
    <property type="entry name" value="RECOMBINATION PROTEIN RECR"/>
    <property type="match status" value="1"/>
</dbReference>
<dbReference type="PANTHER" id="PTHR30446:SF0">
    <property type="entry name" value="RECOMBINATION PROTEIN RECR"/>
    <property type="match status" value="1"/>
</dbReference>
<dbReference type="Pfam" id="PF21175">
    <property type="entry name" value="RecR_C"/>
    <property type="match status" value="1"/>
</dbReference>
<dbReference type="Pfam" id="PF21176">
    <property type="entry name" value="RecR_HhH"/>
    <property type="match status" value="1"/>
</dbReference>
<dbReference type="Pfam" id="PF02132">
    <property type="entry name" value="RecR_ZnF"/>
    <property type="match status" value="1"/>
</dbReference>
<dbReference type="Pfam" id="PF13662">
    <property type="entry name" value="Toprim_4"/>
    <property type="match status" value="1"/>
</dbReference>
<dbReference type="SMART" id="SM00493">
    <property type="entry name" value="TOPRIM"/>
    <property type="match status" value="1"/>
</dbReference>
<dbReference type="SUPFAM" id="SSF111304">
    <property type="entry name" value="Recombination protein RecR"/>
    <property type="match status" value="1"/>
</dbReference>
<dbReference type="PROSITE" id="PS50880">
    <property type="entry name" value="TOPRIM"/>
    <property type="match status" value="1"/>
</dbReference>
<comment type="function">
    <text evidence="1">May play a role in DNA repair. It seems to be involved in an RecBC-independent recombinational process of DNA repair. It may act with RecF and RecO.</text>
</comment>
<comment type="similarity">
    <text evidence="1">Belongs to the RecR family.</text>
</comment>
<accession>Q3MAW5</accession>
<reference key="1">
    <citation type="journal article" date="2014" name="Stand. Genomic Sci.">
        <title>Complete genome sequence of Anabaena variabilis ATCC 29413.</title>
        <authorList>
            <person name="Thiel T."/>
            <person name="Pratte B.S."/>
            <person name="Zhong J."/>
            <person name="Goodwin L."/>
            <person name="Copeland A."/>
            <person name="Lucas S."/>
            <person name="Han C."/>
            <person name="Pitluck S."/>
            <person name="Land M.L."/>
            <person name="Kyrpides N.C."/>
            <person name="Woyke T."/>
        </authorList>
    </citation>
    <scope>NUCLEOTIDE SEQUENCE [LARGE SCALE GENOMIC DNA]</scope>
    <source>
        <strain>ATCC 29413 / PCC 7937</strain>
    </source>
</reference>
<keyword id="KW-0227">DNA damage</keyword>
<keyword id="KW-0233">DNA recombination</keyword>
<keyword id="KW-0234">DNA repair</keyword>
<keyword id="KW-0479">Metal-binding</keyword>
<keyword id="KW-0862">Zinc</keyword>
<keyword id="KW-0863">Zinc-finger</keyword>
<protein>
    <recommendedName>
        <fullName evidence="1">Recombination protein RecR</fullName>
    </recommendedName>
</protein>
<organism>
    <name type="scientific">Trichormus variabilis (strain ATCC 29413 / PCC 7937)</name>
    <name type="common">Anabaena variabilis</name>
    <dbReference type="NCBI Taxonomy" id="240292"/>
    <lineage>
        <taxon>Bacteria</taxon>
        <taxon>Bacillati</taxon>
        <taxon>Cyanobacteriota</taxon>
        <taxon>Cyanophyceae</taxon>
        <taxon>Nostocales</taxon>
        <taxon>Nostocaceae</taxon>
        <taxon>Trichormus</taxon>
    </lineage>
</organism>
<gene>
    <name evidence="1" type="primary">recR</name>
    <name type="ordered locus">Ava_2253</name>
</gene>